<comment type="catalytic activity">
    <reaction>
        <text>D-ribose 5-phosphate + ATP = 5-phospho-alpha-D-ribose 1-diphosphate + AMP + H(+)</text>
        <dbReference type="Rhea" id="RHEA:15609"/>
        <dbReference type="ChEBI" id="CHEBI:15378"/>
        <dbReference type="ChEBI" id="CHEBI:30616"/>
        <dbReference type="ChEBI" id="CHEBI:58017"/>
        <dbReference type="ChEBI" id="CHEBI:78346"/>
        <dbReference type="ChEBI" id="CHEBI:456215"/>
        <dbReference type="EC" id="2.7.6.1"/>
    </reaction>
</comment>
<comment type="cofactor">
    <cofactor evidence="1">
        <name>Mg(2+)</name>
        <dbReference type="ChEBI" id="CHEBI:18420"/>
    </cofactor>
    <text evidence="1">Binds 1 Mg(2+) ion per subunit.</text>
</comment>
<comment type="subcellular location">
    <subcellularLocation>
        <location evidence="4">Plastid</location>
        <location evidence="4">Chloroplast</location>
    </subcellularLocation>
</comment>
<comment type="similarity">
    <text evidence="4">Belongs to the ribose-phosphate pyrophosphokinase family.</text>
</comment>
<sequence>MATAASASASASPAAAFGAKTRRPGPSPSPSPSPASAFARPSPRASAAGRLHASLHLGGASATGSSIVSNASGIHLAAPVLAPLAVPKMTGAVGAHKNVLLFHCEEMRELAEQVVARNDDIELRSISWRTFADGFPNLFISNAHTIRGQHVAFLASFSSPSVIFEQLSIIYALPKLFISSFTLILPFFPTGTSERMEDEGDVATAFTLARILSNIPISRGGPSSLVIFDIHALQERFYFGDSVLPCFESGIPLLKSRLQELPDSDNITIAFPDDGAWKRFYKQLQHFPMVVCNKVREGEQRIVRIKEGDPRGRHVVIVDDLVQSGGTLIECQKVLAEHGAAKVSAYVTHGIFPNKSWEKFQPDNGEGPGHGLSHFWITDSCPLTVNAVKDRQPFEILSLAGPIASALQI</sequence>
<accession>Q8S2E5</accession>
<accession>Q0JJQ6</accession>
<proteinExistence type="evidence at transcript level"/>
<dbReference type="EC" id="2.7.6.1"/>
<dbReference type="EMBL" id="AP003229">
    <property type="protein sequence ID" value="BAB89498.1"/>
    <property type="molecule type" value="Genomic_DNA"/>
</dbReference>
<dbReference type="EMBL" id="AP008207">
    <property type="protein sequence ID" value="BAF06022.1"/>
    <property type="molecule type" value="Genomic_DNA"/>
</dbReference>
<dbReference type="EMBL" id="AP014957">
    <property type="protein sequence ID" value="BAS74111.1"/>
    <property type="molecule type" value="Genomic_DNA"/>
</dbReference>
<dbReference type="EMBL" id="AK109735">
    <property type="protein sequence ID" value="BAG98878.1"/>
    <property type="molecule type" value="mRNA"/>
</dbReference>
<dbReference type="RefSeq" id="XP_015614225.1">
    <property type="nucleotide sequence ID" value="XM_015758739.1"/>
</dbReference>
<dbReference type="SMR" id="Q8S2E5"/>
<dbReference type="FunCoup" id="Q8S2E5">
    <property type="interactions" value="190"/>
</dbReference>
<dbReference type="STRING" id="39947.Q8S2E5"/>
<dbReference type="PaxDb" id="39947-Q8S2E5"/>
<dbReference type="EnsemblPlants" id="Os01t0723600-01">
    <property type="protein sequence ID" value="Os01t0723600-01"/>
    <property type="gene ID" value="Os01g0723600"/>
</dbReference>
<dbReference type="Gramene" id="Os01t0723600-01">
    <property type="protein sequence ID" value="Os01t0723600-01"/>
    <property type="gene ID" value="Os01g0723600"/>
</dbReference>
<dbReference type="KEGG" id="dosa:Os01g0723600"/>
<dbReference type="eggNOG" id="KOG1448">
    <property type="taxonomic scope" value="Eukaryota"/>
</dbReference>
<dbReference type="HOGENOM" id="CLU_048814_0_0_1"/>
<dbReference type="InParanoid" id="Q8S2E5"/>
<dbReference type="OMA" id="SWERFGH"/>
<dbReference type="OrthoDB" id="10263753at2759"/>
<dbReference type="PlantReactome" id="R-OSA-1119278">
    <property type="pathway name" value="PRPP biosynthesis I"/>
</dbReference>
<dbReference type="Proteomes" id="UP000000763">
    <property type="component" value="Chromosome 1"/>
</dbReference>
<dbReference type="Proteomes" id="UP000059680">
    <property type="component" value="Chromosome 1"/>
</dbReference>
<dbReference type="GO" id="GO:0009507">
    <property type="term" value="C:chloroplast"/>
    <property type="evidence" value="ECO:0007669"/>
    <property type="project" value="UniProtKB-SubCell"/>
</dbReference>
<dbReference type="GO" id="GO:0005737">
    <property type="term" value="C:cytoplasm"/>
    <property type="evidence" value="ECO:0000318"/>
    <property type="project" value="GO_Central"/>
</dbReference>
<dbReference type="GO" id="GO:0002189">
    <property type="term" value="C:ribose phosphate diphosphokinase complex"/>
    <property type="evidence" value="ECO:0000318"/>
    <property type="project" value="GO_Central"/>
</dbReference>
<dbReference type="GO" id="GO:0005524">
    <property type="term" value="F:ATP binding"/>
    <property type="evidence" value="ECO:0007669"/>
    <property type="project" value="UniProtKB-KW"/>
</dbReference>
<dbReference type="GO" id="GO:0016301">
    <property type="term" value="F:kinase activity"/>
    <property type="evidence" value="ECO:0007669"/>
    <property type="project" value="UniProtKB-KW"/>
</dbReference>
<dbReference type="GO" id="GO:0000287">
    <property type="term" value="F:magnesium ion binding"/>
    <property type="evidence" value="ECO:0007669"/>
    <property type="project" value="InterPro"/>
</dbReference>
<dbReference type="GO" id="GO:0004749">
    <property type="term" value="F:ribose phosphate diphosphokinase activity"/>
    <property type="evidence" value="ECO:0000318"/>
    <property type="project" value="GO_Central"/>
</dbReference>
<dbReference type="GO" id="GO:0006015">
    <property type="term" value="P:5-phosphoribose 1-diphosphate biosynthetic process"/>
    <property type="evidence" value="ECO:0000318"/>
    <property type="project" value="GO_Central"/>
</dbReference>
<dbReference type="GO" id="GO:0006164">
    <property type="term" value="P:purine nucleotide biosynthetic process"/>
    <property type="evidence" value="ECO:0000318"/>
    <property type="project" value="GO_Central"/>
</dbReference>
<dbReference type="CDD" id="cd06223">
    <property type="entry name" value="PRTases_typeI"/>
    <property type="match status" value="1"/>
</dbReference>
<dbReference type="FunFam" id="3.40.50.2020:FF:000034">
    <property type="entry name" value="Ribose-phosphate pyrophosphokinase 4"/>
    <property type="match status" value="1"/>
</dbReference>
<dbReference type="FunFam" id="3.40.50.2020:FF:000032">
    <property type="entry name" value="ribose-phosphate pyrophosphokinase 4"/>
    <property type="match status" value="1"/>
</dbReference>
<dbReference type="Gene3D" id="3.40.50.2020">
    <property type="match status" value="2"/>
</dbReference>
<dbReference type="InterPro" id="IPR029099">
    <property type="entry name" value="Pribosyltran_N"/>
</dbReference>
<dbReference type="InterPro" id="IPR000836">
    <property type="entry name" value="PRibTrfase_dom"/>
</dbReference>
<dbReference type="InterPro" id="IPR029057">
    <property type="entry name" value="PRTase-like"/>
</dbReference>
<dbReference type="InterPro" id="IPR005946">
    <property type="entry name" value="Rib-P_diPkinase"/>
</dbReference>
<dbReference type="NCBIfam" id="TIGR01251">
    <property type="entry name" value="ribP_PPkin"/>
    <property type="match status" value="1"/>
</dbReference>
<dbReference type="PANTHER" id="PTHR10210">
    <property type="entry name" value="RIBOSE-PHOSPHATE DIPHOSPHOKINASE FAMILY MEMBER"/>
    <property type="match status" value="1"/>
</dbReference>
<dbReference type="PANTHER" id="PTHR10210:SF45">
    <property type="entry name" value="RIBOSE-PHOSPHATE PYROPHOSPHOKINASE 3, CHLOROPLASTIC"/>
    <property type="match status" value="1"/>
</dbReference>
<dbReference type="Pfam" id="PF00156">
    <property type="entry name" value="Pribosyltran"/>
    <property type="match status" value="1"/>
</dbReference>
<dbReference type="Pfam" id="PF13793">
    <property type="entry name" value="Pribosyltran_N"/>
    <property type="match status" value="1"/>
</dbReference>
<dbReference type="SMART" id="SM01400">
    <property type="entry name" value="Pribosyltran_N"/>
    <property type="match status" value="1"/>
</dbReference>
<dbReference type="SUPFAM" id="SSF53271">
    <property type="entry name" value="PRTase-like"/>
    <property type="match status" value="2"/>
</dbReference>
<name>KPRS3_ORYSJ</name>
<protein>
    <recommendedName>
        <fullName>Ribose-phosphate pyrophosphokinase 3, chloroplastic</fullName>
        <ecNumber>2.7.6.1</ecNumber>
    </recommendedName>
    <alternativeName>
        <fullName>Phosphoribosyl pyrophosphate synthase 3</fullName>
    </alternativeName>
</protein>
<keyword id="KW-0067">ATP-binding</keyword>
<keyword id="KW-0150">Chloroplast</keyword>
<keyword id="KW-0418">Kinase</keyword>
<keyword id="KW-0460">Magnesium</keyword>
<keyword id="KW-0479">Metal-binding</keyword>
<keyword id="KW-0545">Nucleotide biosynthesis</keyword>
<keyword id="KW-0547">Nucleotide-binding</keyword>
<keyword id="KW-0934">Plastid</keyword>
<keyword id="KW-1185">Reference proteome</keyword>
<keyword id="KW-0808">Transferase</keyword>
<keyword id="KW-0809">Transit peptide</keyword>
<gene>
    <name type="ordered locus">Os01g0723600</name>
    <name type="ordered locus">LOC_Os01g52530</name>
    <name type="ORF">P0022F10.17</name>
</gene>
<feature type="transit peptide" description="Chloroplast" evidence="2">
    <location>
        <begin position="1"/>
        <end position="44"/>
    </location>
</feature>
<feature type="chain" id="PRO_0000141099" description="Ribose-phosphate pyrophosphokinase 3, chloroplastic">
    <location>
        <begin position="45"/>
        <end position="409"/>
    </location>
</feature>
<feature type="region of interest" description="Disordered" evidence="3">
    <location>
        <begin position="1"/>
        <end position="43"/>
    </location>
</feature>
<feature type="region of interest" description="Binding of phosphoribosylpyrophosphate" evidence="2">
    <location>
        <begin position="312"/>
        <end position="327"/>
    </location>
</feature>
<feature type="compositionally biased region" description="Low complexity" evidence="3">
    <location>
        <begin position="1"/>
        <end position="16"/>
    </location>
</feature>
<feature type="compositionally biased region" description="Low complexity" evidence="3">
    <location>
        <begin position="34"/>
        <end position="43"/>
    </location>
</feature>
<feature type="binding site" evidence="1">
    <location>
        <position position="229"/>
    </location>
    <ligand>
        <name>Mg(2+)</name>
        <dbReference type="ChEBI" id="CHEBI:18420"/>
    </ligand>
</feature>
<feature type="binding site" evidence="1">
    <location>
        <position position="231"/>
    </location>
    <ligand>
        <name>Mg(2+)</name>
        <dbReference type="ChEBI" id="CHEBI:18420"/>
    </ligand>
</feature>
<reference key="1">
    <citation type="journal article" date="2002" name="Nature">
        <title>The genome sequence and structure of rice chromosome 1.</title>
        <authorList>
            <person name="Sasaki T."/>
            <person name="Matsumoto T."/>
            <person name="Yamamoto K."/>
            <person name="Sakata K."/>
            <person name="Baba T."/>
            <person name="Katayose Y."/>
            <person name="Wu J."/>
            <person name="Niimura Y."/>
            <person name="Cheng Z."/>
            <person name="Nagamura Y."/>
            <person name="Antonio B.A."/>
            <person name="Kanamori H."/>
            <person name="Hosokawa S."/>
            <person name="Masukawa M."/>
            <person name="Arikawa K."/>
            <person name="Chiden Y."/>
            <person name="Hayashi M."/>
            <person name="Okamoto M."/>
            <person name="Ando T."/>
            <person name="Aoki H."/>
            <person name="Arita K."/>
            <person name="Hamada M."/>
            <person name="Harada C."/>
            <person name="Hijishita S."/>
            <person name="Honda M."/>
            <person name="Ichikawa Y."/>
            <person name="Idonuma A."/>
            <person name="Iijima M."/>
            <person name="Ikeda M."/>
            <person name="Ikeno M."/>
            <person name="Ito S."/>
            <person name="Ito T."/>
            <person name="Ito Y."/>
            <person name="Ito Y."/>
            <person name="Iwabuchi A."/>
            <person name="Kamiya K."/>
            <person name="Karasawa W."/>
            <person name="Katagiri S."/>
            <person name="Kikuta A."/>
            <person name="Kobayashi N."/>
            <person name="Kono I."/>
            <person name="Machita K."/>
            <person name="Maehara T."/>
            <person name="Mizuno H."/>
            <person name="Mizubayashi T."/>
            <person name="Mukai Y."/>
            <person name="Nagasaki H."/>
            <person name="Nakashima M."/>
            <person name="Nakama Y."/>
            <person name="Nakamichi Y."/>
            <person name="Nakamura M."/>
            <person name="Namiki N."/>
            <person name="Negishi M."/>
            <person name="Ohta I."/>
            <person name="Ono N."/>
            <person name="Saji S."/>
            <person name="Sakai K."/>
            <person name="Shibata M."/>
            <person name="Shimokawa T."/>
            <person name="Shomura A."/>
            <person name="Song J."/>
            <person name="Takazaki Y."/>
            <person name="Terasawa K."/>
            <person name="Tsuji K."/>
            <person name="Waki K."/>
            <person name="Yamagata H."/>
            <person name="Yamane H."/>
            <person name="Yoshiki S."/>
            <person name="Yoshihara R."/>
            <person name="Yukawa K."/>
            <person name="Zhong H."/>
            <person name="Iwama H."/>
            <person name="Endo T."/>
            <person name="Ito H."/>
            <person name="Hahn J.H."/>
            <person name="Kim H.-I."/>
            <person name="Eun M.-Y."/>
            <person name="Yano M."/>
            <person name="Jiang J."/>
            <person name="Gojobori T."/>
        </authorList>
    </citation>
    <scope>NUCLEOTIDE SEQUENCE [LARGE SCALE GENOMIC DNA]</scope>
    <source>
        <strain>cv. Nipponbare</strain>
    </source>
</reference>
<reference key="2">
    <citation type="journal article" date="2005" name="Nature">
        <title>The map-based sequence of the rice genome.</title>
        <authorList>
            <consortium name="International rice genome sequencing project (IRGSP)"/>
        </authorList>
    </citation>
    <scope>NUCLEOTIDE SEQUENCE [LARGE SCALE GENOMIC DNA]</scope>
    <source>
        <strain>cv. Nipponbare</strain>
    </source>
</reference>
<reference key="3">
    <citation type="journal article" date="2008" name="Nucleic Acids Res.">
        <title>The rice annotation project database (RAP-DB): 2008 update.</title>
        <authorList>
            <consortium name="The rice annotation project (RAP)"/>
        </authorList>
    </citation>
    <scope>GENOME REANNOTATION</scope>
    <source>
        <strain>cv. Nipponbare</strain>
    </source>
</reference>
<reference key="4">
    <citation type="journal article" date="2013" name="Rice">
        <title>Improvement of the Oryza sativa Nipponbare reference genome using next generation sequence and optical map data.</title>
        <authorList>
            <person name="Kawahara Y."/>
            <person name="de la Bastide M."/>
            <person name="Hamilton J.P."/>
            <person name="Kanamori H."/>
            <person name="McCombie W.R."/>
            <person name="Ouyang S."/>
            <person name="Schwartz D.C."/>
            <person name="Tanaka T."/>
            <person name="Wu J."/>
            <person name="Zhou S."/>
            <person name="Childs K.L."/>
            <person name="Davidson R.M."/>
            <person name="Lin H."/>
            <person name="Quesada-Ocampo L."/>
            <person name="Vaillancourt B."/>
            <person name="Sakai H."/>
            <person name="Lee S.S."/>
            <person name="Kim J."/>
            <person name="Numa H."/>
            <person name="Itoh T."/>
            <person name="Buell C.R."/>
            <person name="Matsumoto T."/>
        </authorList>
    </citation>
    <scope>GENOME REANNOTATION</scope>
    <source>
        <strain>cv. Nipponbare</strain>
    </source>
</reference>
<reference key="5">
    <citation type="journal article" date="2003" name="Science">
        <title>Collection, mapping, and annotation of over 28,000 cDNA clones from japonica rice.</title>
        <authorList>
            <consortium name="The rice full-length cDNA consortium"/>
        </authorList>
    </citation>
    <scope>NUCLEOTIDE SEQUENCE [LARGE SCALE MRNA]</scope>
    <source>
        <strain>cv. Nipponbare</strain>
    </source>
</reference>
<evidence type="ECO:0000250" key="1"/>
<evidence type="ECO:0000255" key="2"/>
<evidence type="ECO:0000256" key="3">
    <source>
        <dbReference type="SAM" id="MobiDB-lite"/>
    </source>
</evidence>
<evidence type="ECO:0000305" key="4"/>
<organism>
    <name type="scientific">Oryza sativa subsp. japonica</name>
    <name type="common">Rice</name>
    <dbReference type="NCBI Taxonomy" id="39947"/>
    <lineage>
        <taxon>Eukaryota</taxon>
        <taxon>Viridiplantae</taxon>
        <taxon>Streptophyta</taxon>
        <taxon>Embryophyta</taxon>
        <taxon>Tracheophyta</taxon>
        <taxon>Spermatophyta</taxon>
        <taxon>Magnoliopsida</taxon>
        <taxon>Liliopsida</taxon>
        <taxon>Poales</taxon>
        <taxon>Poaceae</taxon>
        <taxon>BOP clade</taxon>
        <taxon>Oryzoideae</taxon>
        <taxon>Oryzeae</taxon>
        <taxon>Oryzinae</taxon>
        <taxon>Oryza</taxon>
        <taxon>Oryza sativa</taxon>
    </lineage>
</organism>